<sequence length="166" mass="18581">MGEEISAIDLVMANDQLVSTSDASDIPYDPYSQFWGKVLVLTFGIICVVFVIFMLHHERIKACRTIISAREQQRTQHSIHRRERSSSGASQQFEHHVRQTDCLPLYEPITALNQQYLKTLPTTSTPPPPAIFDENGEFVGDVPSVAGAIERPPSYESLPAPQNDEV</sequence>
<dbReference type="EMBL" id="CU329670">
    <property type="protein sequence ID" value="CAB52726.1"/>
    <property type="molecule type" value="Genomic_DNA"/>
</dbReference>
<dbReference type="PIR" id="T38982">
    <property type="entry name" value="T38982"/>
</dbReference>
<dbReference type="RefSeq" id="NP_592899.1">
    <property type="nucleotide sequence ID" value="NM_001018299.2"/>
</dbReference>
<dbReference type="SMR" id="Q9UUH8"/>
<dbReference type="BioGRID" id="279851">
    <property type="interactions" value="5"/>
</dbReference>
<dbReference type="iPTMnet" id="Q9UUH8"/>
<dbReference type="PaxDb" id="4896-SPAC630.04c.1"/>
<dbReference type="EnsemblFungi" id="SPAC630.04c.1">
    <property type="protein sequence ID" value="SPAC630.04c.1:pep"/>
    <property type="gene ID" value="SPAC630.04c"/>
</dbReference>
<dbReference type="KEGG" id="spo:2543431"/>
<dbReference type="PomBase" id="SPAC630.04c"/>
<dbReference type="VEuPathDB" id="FungiDB:SPAC630.04c"/>
<dbReference type="HOGENOM" id="CLU_1714360_0_0_1"/>
<dbReference type="InParanoid" id="Q9UUH8"/>
<dbReference type="OMA" id="MLHHERI"/>
<dbReference type="PRO" id="PR:Q9UUH8"/>
<dbReference type="Proteomes" id="UP000002485">
    <property type="component" value="Chromosome I"/>
</dbReference>
<dbReference type="GO" id="GO:0000324">
    <property type="term" value="C:fungal-type vacuole"/>
    <property type="evidence" value="ECO:0007005"/>
    <property type="project" value="PomBase"/>
</dbReference>
<dbReference type="GO" id="GO:0005774">
    <property type="term" value="C:vacuolar membrane"/>
    <property type="evidence" value="ECO:0007669"/>
    <property type="project" value="UniProtKB-SubCell"/>
</dbReference>
<evidence type="ECO:0000255" key="1"/>
<evidence type="ECO:0000256" key="2">
    <source>
        <dbReference type="SAM" id="MobiDB-lite"/>
    </source>
</evidence>
<evidence type="ECO:0000269" key="3">
    <source>
    </source>
</evidence>
<proteinExistence type="predicted"/>
<reference key="1">
    <citation type="journal article" date="2002" name="Nature">
        <title>The genome sequence of Schizosaccharomyces pombe.</title>
        <authorList>
            <person name="Wood V."/>
            <person name="Gwilliam R."/>
            <person name="Rajandream M.A."/>
            <person name="Lyne M.H."/>
            <person name="Lyne R."/>
            <person name="Stewart A."/>
            <person name="Sgouros J.G."/>
            <person name="Peat N."/>
            <person name="Hayles J."/>
            <person name="Baker S.G."/>
            <person name="Basham D."/>
            <person name="Bowman S."/>
            <person name="Brooks K."/>
            <person name="Brown D."/>
            <person name="Brown S."/>
            <person name="Chillingworth T."/>
            <person name="Churcher C.M."/>
            <person name="Collins M."/>
            <person name="Connor R."/>
            <person name="Cronin A."/>
            <person name="Davis P."/>
            <person name="Feltwell T."/>
            <person name="Fraser A."/>
            <person name="Gentles S."/>
            <person name="Goble A."/>
            <person name="Hamlin N."/>
            <person name="Harris D.E."/>
            <person name="Hidalgo J."/>
            <person name="Hodgson G."/>
            <person name="Holroyd S."/>
            <person name="Hornsby T."/>
            <person name="Howarth S."/>
            <person name="Huckle E.J."/>
            <person name="Hunt S."/>
            <person name="Jagels K."/>
            <person name="James K.D."/>
            <person name="Jones L."/>
            <person name="Jones M."/>
            <person name="Leather S."/>
            <person name="McDonald S."/>
            <person name="McLean J."/>
            <person name="Mooney P."/>
            <person name="Moule S."/>
            <person name="Mungall K.L."/>
            <person name="Murphy L.D."/>
            <person name="Niblett D."/>
            <person name="Odell C."/>
            <person name="Oliver K."/>
            <person name="O'Neil S."/>
            <person name="Pearson D."/>
            <person name="Quail M.A."/>
            <person name="Rabbinowitsch E."/>
            <person name="Rutherford K.M."/>
            <person name="Rutter S."/>
            <person name="Saunders D."/>
            <person name="Seeger K."/>
            <person name="Sharp S."/>
            <person name="Skelton J."/>
            <person name="Simmonds M.N."/>
            <person name="Squares R."/>
            <person name="Squares S."/>
            <person name="Stevens K."/>
            <person name="Taylor K."/>
            <person name="Taylor R.G."/>
            <person name="Tivey A."/>
            <person name="Walsh S.V."/>
            <person name="Warren T."/>
            <person name="Whitehead S."/>
            <person name="Woodward J.R."/>
            <person name="Volckaert G."/>
            <person name="Aert R."/>
            <person name="Robben J."/>
            <person name="Grymonprez B."/>
            <person name="Weltjens I."/>
            <person name="Vanstreels E."/>
            <person name="Rieger M."/>
            <person name="Schaefer M."/>
            <person name="Mueller-Auer S."/>
            <person name="Gabel C."/>
            <person name="Fuchs M."/>
            <person name="Duesterhoeft A."/>
            <person name="Fritzc C."/>
            <person name="Holzer E."/>
            <person name="Moestl D."/>
            <person name="Hilbert H."/>
            <person name="Borzym K."/>
            <person name="Langer I."/>
            <person name="Beck A."/>
            <person name="Lehrach H."/>
            <person name="Reinhardt R."/>
            <person name="Pohl T.M."/>
            <person name="Eger P."/>
            <person name="Zimmermann W."/>
            <person name="Wedler H."/>
            <person name="Wambutt R."/>
            <person name="Purnelle B."/>
            <person name="Goffeau A."/>
            <person name="Cadieu E."/>
            <person name="Dreano S."/>
            <person name="Gloux S."/>
            <person name="Lelaure V."/>
            <person name="Mottier S."/>
            <person name="Galibert F."/>
            <person name="Aves S.J."/>
            <person name="Xiang Z."/>
            <person name="Hunt C."/>
            <person name="Moore K."/>
            <person name="Hurst S.M."/>
            <person name="Lucas M."/>
            <person name="Rochet M."/>
            <person name="Gaillardin C."/>
            <person name="Tallada V.A."/>
            <person name="Garzon A."/>
            <person name="Thode G."/>
            <person name="Daga R.R."/>
            <person name="Cruzado L."/>
            <person name="Jimenez J."/>
            <person name="Sanchez M."/>
            <person name="del Rey F."/>
            <person name="Benito J."/>
            <person name="Dominguez A."/>
            <person name="Revuelta J.L."/>
            <person name="Moreno S."/>
            <person name="Armstrong J."/>
            <person name="Forsburg S.L."/>
            <person name="Cerutti L."/>
            <person name="Lowe T."/>
            <person name="McCombie W.R."/>
            <person name="Paulsen I."/>
            <person name="Potashkin J."/>
            <person name="Shpakovski G.V."/>
            <person name="Ussery D."/>
            <person name="Barrell B.G."/>
            <person name="Nurse P."/>
        </authorList>
    </citation>
    <scope>NUCLEOTIDE SEQUENCE [LARGE SCALE GENOMIC DNA]</scope>
    <source>
        <strain>972 / ATCC 24843</strain>
    </source>
</reference>
<reference key="2">
    <citation type="journal article" date="2006" name="Nat. Biotechnol.">
        <title>ORFeome cloning and global analysis of protein localization in the fission yeast Schizosaccharomyces pombe.</title>
        <authorList>
            <person name="Matsuyama A."/>
            <person name="Arai R."/>
            <person name="Yashiroda Y."/>
            <person name="Shirai A."/>
            <person name="Kamata A."/>
            <person name="Sekido S."/>
            <person name="Kobayashi Y."/>
            <person name="Hashimoto A."/>
            <person name="Hamamoto M."/>
            <person name="Hiraoka Y."/>
            <person name="Horinouchi S."/>
            <person name="Yoshida M."/>
        </authorList>
    </citation>
    <scope>SUBCELLULAR LOCATION [LARGE SCALE ANALYSIS]</scope>
</reference>
<name>YKI4_SCHPO</name>
<protein>
    <recommendedName>
        <fullName>Uncharacterized protein C630.04c</fullName>
    </recommendedName>
</protein>
<organism>
    <name type="scientific">Schizosaccharomyces pombe (strain 972 / ATCC 24843)</name>
    <name type="common">Fission yeast</name>
    <dbReference type="NCBI Taxonomy" id="284812"/>
    <lineage>
        <taxon>Eukaryota</taxon>
        <taxon>Fungi</taxon>
        <taxon>Dikarya</taxon>
        <taxon>Ascomycota</taxon>
        <taxon>Taphrinomycotina</taxon>
        <taxon>Schizosaccharomycetes</taxon>
        <taxon>Schizosaccharomycetales</taxon>
        <taxon>Schizosaccharomycetaceae</taxon>
        <taxon>Schizosaccharomyces</taxon>
    </lineage>
</organism>
<comment type="subcellular location">
    <subcellularLocation>
        <location evidence="3">Vacuole membrane</location>
        <topology evidence="3">Single-pass membrane protein</topology>
    </subcellularLocation>
</comment>
<accession>Q9UUH8</accession>
<feature type="chain" id="PRO_0000304110" description="Uncharacterized protein C630.04c">
    <location>
        <begin position="1"/>
        <end position="166"/>
    </location>
</feature>
<feature type="transmembrane region" description="Helical" evidence="1">
    <location>
        <begin position="34"/>
        <end position="54"/>
    </location>
</feature>
<feature type="region of interest" description="Disordered" evidence="2">
    <location>
        <begin position="73"/>
        <end position="93"/>
    </location>
</feature>
<feature type="region of interest" description="Disordered" evidence="2">
    <location>
        <begin position="123"/>
        <end position="166"/>
    </location>
</feature>
<keyword id="KW-0472">Membrane</keyword>
<keyword id="KW-1185">Reference proteome</keyword>
<keyword id="KW-0812">Transmembrane</keyword>
<keyword id="KW-1133">Transmembrane helix</keyword>
<keyword id="KW-0926">Vacuole</keyword>
<gene>
    <name type="ORF">SPAC630.04c</name>
</gene>